<accession>O34418</accession>
<feature type="signal peptide" evidence="1">
    <location>
        <begin position="1"/>
        <end position="31"/>
    </location>
</feature>
<feature type="chain" id="PRO_0000013699" description="Uncharacterized protein YfkI">
    <location>
        <begin position="32"/>
        <end position="106"/>
    </location>
</feature>
<feature type="coiled-coil region" evidence="1">
    <location>
        <begin position="57"/>
        <end position="89"/>
    </location>
</feature>
<name>YFKI_BACSU</name>
<organism>
    <name type="scientific">Bacillus subtilis (strain 168)</name>
    <dbReference type="NCBI Taxonomy" id="224308"/>
    <lineage>
        <taxon>Bacteria</taxon>
        <taxon>Bacillati</taxon>
        <taxon>Bacillota</taxon>
        <taxon>Bacilli</taxon>
        <taxon>Bacillales</taxon>
        <taxon>Bacillaceae</taxon>
        <taxon>Bacillus</taxon>
    </lineage>
</organism>
<sequence length="106" mass="12051">MNNERLMLKGIFLGAAAGAALSLLHKPTRQACGMRWLTCKHKLSLYKSNPELLKNTVITKVDEAKKLARTLSKEVDFVNQQVKELKKTTPQVMELVQETKEHFSKK</sequence>
<keyword id="KW-0175">Coiled coil</keyword>
<keyword id="KW-1185">Reference proteome</keyword>
<keyword id="KW-0732">Signal</keyword>
<reference key="1">
    <citation type="submission" date="1997-11" db="EMBL/GenBank/DDBJ databases">
        <title>Nucleotide sequence analysis of B. subtilis chromosome in 74 degree region.</title>
        <authorList>
            <person name="Sekiguchi J."/>
            <person name="Yamamoto H."/>
            <person name="Uchiyama S."/>
            <person name="Fajar A."/>
        </authorList>
    </citation>
    <scope>NUCLEOTIDE SEQUENCE [GENOMIC DNA]</scope>
    <source>
        <strain>168 / AC327</strain>
    </source>
</reference>
<reference key="2">
    <citation type="journal article" date="1997" name="Nature">
        <title>The complete genome sequence of the Gram-positive bacterium Bacillus subtilis.</title>
        <authorList>
            <person name="Kunst F."/>
            <person name="Ogasawara N."/>
            <person name="Moszer I."/>
            <person name="Albertini A.M."/>
            <person name="Alloni G."/>
            <person name="Azevedo V."/>
            <person name="Bertero M.G."/>
            <person name="Bessieres P."/>
            <person name="Bolotin A."/>
            <person name="Borchert S."/>
            <person name="Borriss R."/>
            <person name="Boursier L."/>
            <person name="Brans A."/>
            <person name="Braun M."/>
            <person name="Brignell S.C."/>
            <person name="Bron S."/>
            <person name="Brouillet S."/>
            <person name="Bruschi C.V."/>
            <person name="Caldwell B."/>
            <person name="Capuano V."/>
            <person name="Carter N.M."/>
            <person name="Choi S.-K."/>
            <person name="Codani J.-J."/>
            <person name="Connerton I.F."/>
            <person name="Cummings N.J."/>
            <person name="Daniel R.A."/>
            <person name="Denizot F."/>
            <person name="Devine K.M."/>
            <person name="Duesterhoeft A."/>
            <person name="Ehrlich S.D."/>
            <person name="Emmerson P.T."/>
            <person name="Entian K.-D."/>
            <person name="Errington J."/>
            <person name="Fabret C."/>
            <person name="Ferrari E."/>
            <person name="Foulger D."/>
            <person name="Fritz C."/>
            <person name="Fujita M."/>
            <person name="Fujita Y."/>
            <person name="Fuma S."/>
            <person name="Galizzi A."/>
            <person name="Galleron N."/>
            <person name="Ghim S.-Y."/>
            <person name="Glaser P."/>
            <person name="Goffeau A."/>
            <person name="Golightly E.J."/>
            <person name="Grandi G."/>
            <person name="Guiseppi G."/>
            <person name="Guy B.J."/>
            <person name="Haga K."/>
            <person name="Haiech J."/>
            <person name="Harwood C.R."/>
            <person name="Henaut A."/>
            <person name="Hilbert H."/>
            <person name="Holsappel S."/>
            <person name="Hosono S."/>
            <person name="Hullo M.-F."/>
            <person name="Itaya M."/>
            <person name="Jones L.-M."/>
            <person name="Joris B."/>
            <person name="Karamata D."/>
            <person name="Kasahara Y."/>
            <person name="Klaerr-Blanchard M."/>
            <person name="Klein C."/>
            <person name="Kobayashi Y."/>
            <person name="Koetter P."/>
            <person name="Koningstein G."/>
            <person name="Krogh S."/>
            <person name="Kumano M."/>
            <person name="Kurita K."/>
            <person name="Lapidus A."/>
            <person name="Lardinois S."/>
            <person name="Lauber J."/>
            <person name="Lazarevic V."/>
            <person name="Lee S.-M."/>
            <person name="Levine A."/>
            <person name="Liu H."/>
            <person name="Masuda S."/>
            <person name="Mauel C."/>
            <person name="Medigue C."/>
            <person name="Medina N."/>
            <person name="Mellado R.P."/>
            <person name="Mizuno M."/>
            <person name="Moestl D."/>
            <person name="Nakai S."/>
            <person name="Noback M."/>
            <person name="Noone D."/>
            <person name="O'Reilly M."/>
            <person name="Ogawa K."/>
            <person name="Ogiwara A."/>
            <person name="Oudega B."/>
            <person name="Park S.-H."/>
            <person name="Parro V."/>
            <person name="Pohl T.M."/>
            <person name="Portetelle D."/>
            <person name="Porwollik S."/>
            <person name="Prescott A.M."/>
            <person name="Presecan E."/>
            <person name="Pujic P."/>
            <person name="Purnelle B."/>
            <person name="Rapoport G."/>
            <person name="Rey M."/>
            <person name="Reynolds S."/>
            <person name="Rieger M."/>
            <person name="Rivolta C."/>
            <person name="Rocha E."/>
            <person name="Roche B."/>
            <person name="Rose M."/>
            <person name="Sadaie Y."/>
            <person name="Sato T."/>
            <person name="Scanlan E."/>
            <person name="Schleich S."/>
            <person name="Schroeter R."/>
            <person name="Scoffone F."/>
            <person name="Sekiguchi J."/>
            <person name="Sekowska A."/>
            <person name="Seror S.J."/>
            <person name="Serror P."/>
            <person name="Shin B.-S."/>
            <person name="Soldo B."/>
            <person name="Sorokin A."/>
            <person name="Tacconi E."/>
            <person name="Takagi T."/>
            <person name="Takahashi H."/>
            <person name="Takemaru K."/>
            <person name="Takeuchi M."/>
            <person name="Tamakoshi A."/>
            <person name="Tanaka T."/>
            <person name="Terpstra P."/>
            <person name="Tognoni A."/>
            <person name="Tosato V."/>
            <person name="Uchiyama S."/>
            <person name="Vandenbol M."/>
            <person name="Vannier F."/>
            <person name="Vassarotti A."/>
            <person name="Viari A."/>
            <person name="Wambutt R."/>
            <person name="Wedler E."/>
            <person name="Wedler H."/>
            <person name="Weitzenegger T."/>
            <person name="Winters P."/>
            <person name="Wipat A."/>
            <person name="Yamamoto H."/>
            <person name="Yamane K."/>
            <person name="Yasumoto K."/>
            <person name="Yata K."/>
            <person name="Yoshida K."/>
            <person name="Yoshikawa H.-F."/>
            <person name="Zumstein E."/>
            <person name="Yoshikawa H."/>
            <person name="Danchin A."/>
        </authorList>
    </citation>
    <scope>NUCLEOTIDE SEQUENCE [LARGE SCALE GENOMIC DNA]</scope>
    <source>
        <strain>168</strain>
    </source>
</reference>
<dbReference type="EMBL" id="D83967">
    <property type="protein sequence ID" value="BAA23399.1"/>
    <property type="molecule type" value="Genomic_DNA"/>
</dbReference>
<dbReference type="EMBL" id="AL009126">
    <property type="protein sequence ID" value="CAB12618.1"/>
    <property type="molecule type" value="Genomic_DNA"/>
</dbReference>
<dbReference type="PIR" id="D69808">
    <property type="entry name" value="D69808"/>
</dbReference>
<dbReference type="RefSeq" id="NP_388670.1">
    <property type="nucleotide sequence ID" value="NC_000964.3"/>
</dbReference>
<dbReference type="RefSeq" id="WP_003242981.1">
    <property type="nucleotide sequence ID" value="NZ_OZ025638.1"/>
</dbReference>
<dbReference type="SMR" id="O34418"/>
<dbReference type="FunCoup" id="O34418">
    <property type="interactions" value="32"/>
</dbReference>
<dbReference type="STRING" id="224308.BSU07890"/>
<dbReference type="PaxDb" id="224308-BSU07890"/>
<dbReference type="DNASU" id="939691"/>
<dbReference type="EnsemblBacteria" id="CAB12618">
    <property type="protein sequence ID" value="CAB12618"/>
    <property type="gene ID" value="BSU_07890"/>
</dbReference>
<dbReference type="GeneID" id="939691"/>
<dbReference type="KEGG" id="bsu:BSU07890"/>
<dbReference type="PATRIC" id="fig|224308.179.peg.853"/>
<dbReference type="eggNOG" id="COG4980">
    <property type="taxonomic scope" value="Bacteria"/>
</dbReference>
<dbReference type="InParanoid" id="O34418"/>
<dbReference type="OrthoDB" id="2353585at2"/>
<dbReference type="BioCyc" id="BSUB:BSU07890-MONOMER"/>
<dbReference type="Proteomes" id="UP000001570">
    <property type="component" value="Chromosome"/>
</dbReference>
<gene>
    <name type="primary">yfkI</name>
    <name type="ordered locus">BSU07890</name>
</gene>
<protein>
    <recommendedName>
        <fullName>Uncharacterized protein YfkI</fullName>
    </recommendedName>
</protein>
<proteinExistence type="inferred from homology"/>
<evidence type="ECO:0000255" key="1"/>